<feature type="chain" id="PRO_0000264135" description="Peptidyl-tRNA hydrolase">
    <location>
        <begin position="1"/>
        <end position="219"/>
    </location>
</feature>
<feature type="active site" description="Proton acceptor" evidence="1">
    <location>
        <position position="31"/>
    </location>
</feature>
<feature type="binding site" evidence="1">
    <location>
        <position position="26"/>
    </location>
    <ligand>
        <name>tRNA</name>
        <dbReference type="ChEBI" id="CHEBI:17843"/>
    </ligand>
</feature>
<feature type="binding site" evidence="1">
    <location>
        <position position="78"/>
    </location>
    <ligand>
        <name>tRNA</name>
        <dbReference type="ChEBI" id="CHEBI:17843"/>
    </ligand>
</feature>
<feature type="binding site" evidence="1">
    <location>
        <position position="80"/>
    </location>
    <ligand>
        <name>tRNA</name>
        <dbReference type="ChEBI" id="CHEBI:17843"/>
    </ligand>
</feature>
<feature type="binding site" evidence="1">
    <location>
        <position position="126"/>
    </location>
    <ligand>
        <name>tRNA</name>
        <dbReference type="ChEBI" id="CHEBI:17843"/>
    </ligand>
</feature>
<feature type="site" description="Discriminates between blocked and unblocked aminoacyl-tRNA" evidence="1">
    <location>
        <position position="21"/>
    </location>
</feature>
<feature type="site" description="Stabilizes the basic form of H active site to accept a proton" evidence="1">
    <location>
        <position position="105"/>
    </location>
</feature>
<comment type="function">
    <text evidence="1">Hydrolyzes ribosome-free peptidyl-tRNAs (with 1 or more amino acids incorporated), which drop off the ribosome during protein synthesis, or as a result of ribosome stalling.</text>
</comment>
<comment type="function">
    <text evidence="1">Catalyzes the release of premature peptidyl moieties from peptidyl-tRNA molecules trapped in stalled 50S ribosomal subunits, and thus maintains levels of free tRNAs and 50S ribosomes.</text>
</comment>
<comment type="catalytic activity">
    <reaction evidence="1">
        <text>an N-acyl-L-alpha-aminoacyl-tRNA + H2O = an N-acyl-L-amino acid + a tRNA + H(+)</text>
        <dbReference type="Rhea" id="RHEA:54448"/>
        <dbReference type="Rhea" id="RHEA-COMP:10123"/>
        <dbReference type="Rhea" id="RHEA-COMP:13883"/>
        <dbReference type="ChEBI" id="CHEBI:15377"/>
        <dbReference type="ChEBI" id="CHEBI:15378"/>
        <dbReference type="ChEBI" id="CHEBI:59874"/>
        <dbReference type="ChEBI" id="CHEBI:78442"/>
        <dbReference type="ChEBI" id="CHEBI:138191"/>
        <dbReference type="EC" id="3.1.1.29"/>
    </reaction>
</comment>
<comment type="subunit">
    <text evidence="1">Monomer.</text>
</comment>
<comment type="subcellular location">
    <subcellularLocation>
        <location evidence="1">Cytoplasm</location>
    </subcellularLocation>
</comment>
<comment type="similarity">
    <text evidence="1">Belongs to the PTH family.</text>
</comment>
<evidence type="ECO:0000255" key="1">
    <source>
        <dbReference type="HAMAP-Rule" id="MF_00083"/>
    </source>
</evidence>
<organism>
    <name type="scientific">Trichodesmium erythraeum (strain IMS101)</name>
    <dbReference type="NCBI Taxonomy" id="203124"/>
    <lineage>
        <taxon>Bacteria</taxon>
        <taxon>Bacillati</taxon>
        <taxon>Cyanobacteriota</taxon>
        <taxon>Cyanophyceae</taxon>
        <taxon>Oscillatoriophycideae</taxon>
        <taxon>Oscillatoriales</taxon>
        <taxon>Microcoleaceae</taxon>
        <taxon>Trichodesmium</taxon>
    </lineage>
</organism>
<reference key="1">
    <citation type="journal article" date="2015" name="Proc. Natl. Acad. Sci. U.S.A.">
        <title>Trichodesmium genome maintains abundant, widespread noncoding DNA in situ, despite oligotrophic lifestyle.</title>
        <authorList>
            <person name="Walworth N."/>
            <person name="Pfreundt U."/>
            <person name="Nelson W.C."/>
            <person name="Mincer T."/>
            <person name="Heidelberg J.F."/>
            <person name="Fu F."/>
            <person name="Waterbury J.B."/>
            <person name="Glavina del Rio T."/>
            <person name="Goodwin L."/>
            <person name="Kyrpides N.C."/>
            <person name="Land M.L."/>
            <person name="Woyke T."/>
            <person name="Hutchins D.A."/>
            <person name="Hess W.R."/>
            <person name="Webb E.A."/>
        </authorList>
    </citation>
    <scope>NUCLEOTIDE SEQUENCE [LARGE SCALE GENOMIC DNA]</scope>
    <source>
        <strain>IMS101</strain>
    </source>
</reference>
<name>PTH_TRIEI</name>
<keyword id="KW-0963">Cytoplasm</keyword>
<keyword id="KW-0378">Hydrolase</keyword>
<keyword id="KW-0694">RNA-binding</keyword>
<keyword id="KW-0820">tRNA-binding</keyword>
<gene>
    <name evidence="1" type="primary">pth</name>
    <name type="ordered locus">Tery_2870</name>
</gene>
<accession>Q110N1</accession>
<protein>
    <recommendedName>
        <fullName evidence="1">Peptidyl-tRNA hydrolase</fullName>
        <shortName evidence="1">Pth</shortName>
        <ecNumber evidence="1">3.1.1.29</ecNumber>
    </recommendedName>
</protein>
<dbReference type="EC" id="3.1.1.29" evidence="1"/>
<dbReference type="EMBL" id="CP000393">
    <property type="protein sequence ID" value="ABG52043.1"/>
    <property type="molecule type" value="Genomic_DNA"/>
</dbReference>
<dbReference type="RefSeq" id="WP_011612402.1">
    <property type="nucleotide sequence ID" value="NC_008312.1"/>
</dbReference>
<dbReference type="SMR" id="Q110N1"/>
<dbReference type="STRING" id="203124.Tery_2870"/>
<dbReference type="KEGG" id="ter:Tery_2870"/>
<dbReference type="eggNOG" id="COG0193">
    <property type="taxonomic scope" value="Bacteria"/>
</dbReference>
<dbReference type="HOGENOM" id="CLU_062456_4_1_3"/>
<dbReference type="OrthoDB" id="9800507at2"/>
<dbReference type="GO" id="GO:0005737">
    <property type="term" value="C:cytoplasm"/>
    <property type="evidence" value="ECO:0007669"/>
    <property type="project" value="UniProtKB-SubCell"/>
</dbReference>
<dbReference type="GO" id="GO:0004045">
    <property type="term" value="F:peptidyl-tRNA hydrolase activity"/>
    <property type="evidence" value="ECO:0007669"/>
    <property type="project" value="UniProtKB-UniRule"/>
</dbReference>
<dbReference type="GO" id="GO:0000049">
    <property type="term" value="F:tRNA binding"/>
    <property type="evidence" value="ECO:0007669"/>
    <property type="project" value="UniProtKB-UniRule"/>
</dbReference>
<dbReference type="GO" id="GO:0006515">
    <property type="term" value="P:protein quality control for misfolded or incompletely synthesized proteins"/>
    <property type="evidence" value="ECO:0007669"/>
    <property type="project" value="UniProtKB-UniRule"/>
</dbReference>
<dbReference type="GO" id="GO:0072344">
    <property type="term" value="P:rescue of stalled ribosome"/>
    <property type="evidence" value="ECO:0007669"/>
    <property type="project" value="UniProtKB-UniRule"/>
</dbReference>
<dbReference type="CDD" id="cd00462">
    <property type="entry name" value="PTH"/>
    <property type="match status" value="1"/>
</dbReference>
<dbReference type="FunFam" id="3.40.50.1470:FF:000001">
    <property type="entry name" value="Peptidyl-tRNA hydrolase"/>
    <property type="match status" value="1"/>
</dbReference>
<dbReference type="Gene3D" id="3.40.50.1470">
    <property type="entry name" value="Peptidyl-tRNA hydrolase"/>
    <property type="match status" value="1"/>
</dbReference>
<dbReference type="HAMAP" id="MF_00083">
    <property type="entry name" value="Pept_tRNA_hydro_bact"/>
    <property type="match status" value="1"/>
</dbReference>
<dbReference type="InterPro" id="IPR001328">
    <property type="entry name" value="Pept_tRNA_hydro"/>
</dbReference>
<dbReference type="InterPro" id="IPR036416">
    <property type="entry name" value="Pept_tRNA_hydro_sf"/>
</dbReference>
<dbReference type="NCBIfam" id="TIGR00447">
    <property type="entry name" value="pth"/>
    <property type="match status" value="1"/>
</dbReference>
<dbReference type="PANTHER" id="PTHR17224">
    <property type="entry name" value="PEPTIDYL-TRNA HYDROLASE"/>
    <property type="match status" value="1"/>
</dbReference>
<dbReference type="PANTHER" id="PTHR17224:SF1">
    <property type="entry name" value="PEPTIDYL-TRNA HYDROLASE"/>
    <property type="match status" value="1"/>
</dbReference>
<dbReference type="Pfam" id="PF01195">
    <property type="entry name" value="Pept_tRNA_hydro"/>
    <property type="match status" value="1"/>
</dbReference>
<dbReference type="SUPFAM" id="SSF53178">
    <property type="entry name" value="Peptidyl-tRNA hydrolase-like"/>
    <property type="match status" value="1"/>
</dbReference>
<sequence>MKEVAPAANLVIPKLIVGLGNPEPKYDQTRHNIGFTGIDTIANIWQVSLSENRKFKGEFGEGRRPKAEKIYLLKPLTYMNRSGEAISAVVNWYKLPPSCVLIIYDDMDLPMGRLRLRLSGSAGGHNGMKSAIAHLGTQEFPRLRIGIGKPKNITAERGEAKTISHVLGKFSPKENKLMTQVLELVVDAVELSLKQGIEKAMSLYNNRTITENPVSKPPS</sequence>
<proteinExistence type="inferred from homology"/>